<protein>
    <recommendedName>
        <fullName evidence="1">Protein Smg homolog</fullName>
    </recommendedName>
</protein>
<sequence length="159" mass="18518">MMMDILMYLFETYIHSDAELQVEQDELEEELLRAGFQQKDIYKALVWLEELAALQQSDTSSAISACIASSSTRIYTAKEMQRLDLECRGFLLFLEQINVLTTETREMVIDRVMGLETSEFELEDLKWIILMVLFNVPGNENAYTLMEELLYTKEQGILH</sequence>
<proteinExistence type="inferred from homology"/>
<name>SMG_VIBPA</name>
<evidence type="ECO:0000255" key="1">
    <source>
        <dbReference type="HAMAP-Rule" id="MF_00598"/>
    </source>
</evidence>
<feature type="chain" id="PRO_0000209185" description="Protein Smg homolog">
    <location>
        <begin position="1"/>
        <end position="159"/>
    </location>
</feature>
<comment type="similarity">
    <text evidence="1">Belongs to the Smg family.</text>
</comment>
<accession>Q87KD8</accession>
<gene>
    <name evidence="1" type="primary">smg</name>
    <name type="ordered locus">VP3039</name>
</gene>
<reference key="1">
    <citation type="journal article" date="2003" name="Lancet">
        <title>Genome sequence of Vibrio parahaemolyticus: a pathogenic mechanism distinct from that of V. cholerae.</title>
        <authorList>
            <person name="Makino K."/>
            <person name="Oshima K."/>
            <person name="Kurokawa K."/>
            <person name="Yokoyama K."/>
            <person name="Uda T."/>
            <person name="Tagomori K."/>
            <person name="Iijima Y."/>
            <person name="Najima M."/>
            <person name="Nakano M."/>
            <person name="Yamashita A."/>
            <person name="Kubota Y."/>
            <person name="Kimura S."/>
            <person name="Yasunaga T."/>
            <person name="Honda T."/>
            <person name="Shinagawa H."/>
            <person name="Hattori M."/>
            <person name="Iida T."/>
        </authorList>
    </citation>
    <scope>NUCLEOTIDE SEQUENCE [LARGE SCALE GENOMIC DNA]</scope>
    <source>
        <strain>RIMD 2210633</strain>
    </source>
</reference>
<organism>
    <name type="scientific">Vibrio parahaemolyticus serotype O3:K6 (strain RIMD 2210633)</name>
    <dbReference type="NCBI Taxonomy" id="223926"/>
    <lineage>
        <taxon>Bacteria</taxon>
        <taxon>Pseudomonadati</taxon>
        <taxon>Pseudomonadota</taxon>
        <taxon>Gammaproteobacteria</taxon>
        <taxon>Vibrionales</taxon>
        <taxon>Vibrionaceae</taxon>
        <taxon>Vibrio</taxon>
    </lineage>
</organism>
<dbReference type="EMBL" id="BA000031">
    <property type="protein sequence ID" value="BAC61302.1"/>
    <property type="molecule type" value="Genomic_DNA"/>
</dbReference>
<dbReference type="RefSeq" id="NP_799418.1">
    <property type="nucleotide sequence ID" value="NC_004603.1"/>
</dbReference>
<dbReference type="RefSeq" id="WP_005461440.1">
    <property type="nucleotide sequence ID" value="NC_004603.1"/>
</dbReference>
<dbReference type="SMR" id="Q87KD8"/>
<dbReference type="GeneID" id="1190638"/>
<dbReference type="KEGG" id="vpa:VP3039"/>
<dbReference type="PATRIC" id="fig|223926.6.peg.2924"/>
<dbReference type="eggNOG" id="COG2922">
    <property type="taxonomic scope" value="Bacteria"/>
</dbReference>
<dbReference type="HOGENOM" id="CLU_133242_0_0_6"/>
<dbReference type="Proteomes" id="UP000002493">
    <property type="component" value="Chromosome 1"/>
</dbReference>
<dbReference type="HAMAP" id="MF_00598">
    <property type="entry name" value="Smg"/>
    <property type="match status" value="1"/>
</dbReference>
<dbReference type="InterPro" id="IPR007456">
    <property type="entry name" value="Smg"/>
</dbReference>
<dbReference type="NCBIfam" id="NF002897">
    <property type="entry name" value="PRK03430.1"/>
    <property type="match status" value="1"/>
</dbReference>
<dbReference type="PANTHER" id="PTHR38692">
    <property type="entry name" value="PROTEIN SMG"/>
    <property type="match status" value="1"/>
</dbReference>
<dbReference type="PANTHER" id="PTHR38692:SF1">
    <property type="entry name" value="PROTEIN SMG"/>
    <property type="match status" value="1"/>
</dbReference>
<dbReference type="Pfam" id="PF04361">
    <property type="entry name" value="DUF494"/>
    <property type="match status" value="1"/>
</dbReference>